<reference key="1">
    <citation type="journal article" date="2000" name="Nature">
        <title>Sequence and analysis of chromosome 3 of the plant Arabidopsis thaliana.</title>
        <authorList>
            <person name="Salanoubat M."/>
            <person name="Lemcke K."/>
            <person name="Rieger M."/>
            <person name="Ansorge W."/>
            <person name="Unseld M."/>
            <person name="Fartmann B."/>
            <person name="Valle G."/>
            <person name="Bloecker H."/>
            <person name="Perez-Alonso M."/>
            <person name="Obermaier B."/>
            <person name="Delseny M."/>
            <person name="Boutry M."/>
            <person name="Grivell L.A."/>
            <person name="Mache R."/>
            <person name="Puigdomenech P."/>
            <person name="De Simone V."/>
            <person name="Choisne N."/>
            <person name="Artiguenave F."/>
            <person name="Robert C."/>
            <person name="Brottier P."/>
            <person name="Wincker P."/>
            <person name="Cattolico L."/>
            <person name="Weissenbach J."/>
            <person name="Saurin W."/>
            <person name="Quetier F."/>
            <person name="Schaefer M."/>
            <person name="Mueller-Auer S."/>
            <person name="Gabel C."/>
            <person name="Fuchs M."/>
            <person name="Benes V."/>
            <person name="Wurmbach E."/>
            <person name="Drzonek H."/>
            <person name="Erfle H."/>
            <person name="Jordan N."/>
            <person name="Bangert S."/>
            <person name="Wiedelmann R."/>
            <person name="Kranz H."/>
            <person name="Voss H."/>
            <person name="Holland R."/>
            <person name="Brandt P."/>
            <person name="Nyakatura G."/>
            <person name="Vezzi A."/>
            <person name="D'Angelo M."/>
            <person name="Pallavicini A."/>
            <person name="Toppo S."/>
            <person name="Simionati B."/>
            <person name="Conrad A."/>
            <person name="Hornischer K."/>
            <person name="Kauer G."/>
            <person name="Loehnert T.-H."/>
            <person name="Nordsiek G."/>
            <person name="Reichelt J."/>
            <person name="Scharfe M."/>
            <person name="Schoen O."/>
            <person name="Bargues M."/>
            <person name="Terol J."/>
            <person name="Climent J."/>
            <person name="Navarro P."/>
            <person name="Collado C."/>
            <person name="Perez-Perez A."/>
            <person name="Ottenwaelder B."/>
            <person name="Duchemin D."/>
            <person name="Cooke R."/>
            <person name="Laudie M."/>
            <person name="Berger-Llauro C."/>
            <person name="Purnelle B."/>
            <person name="Masuy D."/>
            <person name="de Haan M."/>
            <person name="Maarse A.C."/>
            <person name="Alcaraz J.-P."/>
            <person name="Cottet A."/>
            <person name="Casacuberta E."/>
            <person name="Monfort A."/>
            <person name="Argiriou A."/>
            <person name="Flores M."/>
            <person name="Liguori R."/>
            <person name="Vitale D."/>
            <person name="Mannhaupt G."/>
            <person name="Haase D."/>
            <person name="Schoof H."/>
            <person name="Rudd S."/>
            <person name="Zaccaria P."/>
            <person name="Mewes H.-W."/>
            <person name="Mayer K.F.X."/>
            <person name="Kaul S."/>
            <person name="Town C.D."/>
            <person name="Koo H.L."/>
            <person name="Tallon L.J."/>
            <person name="Jenkins J."/>
            <person name="Rooney T."/>
            <person name="Rizzo M."/>
            <person name="Walts A."/>
            <person name="Utterback T."/>
            <person name="Fujii C.Y."/>
            <person name="Shea T.P."/>
            <person name="Creasy T.H."/>
            <person name="Haas B."/>
            <person name="Maiti R."/>
            <person name="Wu D."/>
            <person name="Peterson J."/>
            <person name="Van Aken S."/>
            <person name="Pai G."/>
            <person name="Militscher J."/>
            <person name="Sellers P."/>
            <person name="Gill J.E."/>
            <person name="Feldblyum T.V."/>
            <person name="Preuss D."/>
            <person name="Lin X."/>
            <person name="Nierman W.C."/>
            <person name="Salzberg S.L."/>
            <person name="White O."/>
            <person name="Venter J.C."/>
            <person name="Fraser C.M."/>
            <person name="Kaneko T."/>
            <person name="Nakamura Y."/>
            <person name="Sato S."/>
            <person name="Kato T."/>
            <person name="Asamizu E."/>
            <person name="Sasamoto S."/>
            <person name="Kimura T."/>
            <person name="Idesawa K."/>
            <person name="Kawashima K."/>
            <person name="Kishida Y."/>
            <person name="Kiyokawa C."/>
            <person name="Kohara M."/>
            <person name="Matsumoto M."/>
            <person name="Matsuno A."/>
            <person name="Muraki A."/>
            <person name="Nakayama S."/>
            <person name="Nakazaki N."/>
            <person name="Shinpo S."/>
            <person name="Takeuchi C."/>
            <person name="Wada T."/>
            <person name="Watanabe A."/>
            <person name="Yamada M."/>
            <person name="Yasuda M."/>
            <person name="Tabata S."/>
        </authorList>
    </citation>
    <scope>NUCLEOTIDE SEQUENCE [LARGE SCALE GENOMIC DNA]</scope>
    <source>
        <strain>cv. Columbia</strain>
    </source>
</reference>
<reference key="2">
    <citation type="journal article" date="2017" name="Plant J.">
        <title>Araport11: a complete reannotation of the Arabidopsis thaliana reference genome.</title>
        <authorList>
            <person name="Cheng C.Y."/>
            <person name="Krishnakumar V."/>
            <person name="Chan A.P."/>
            <person name="Thibaud-Nissen F."/>
            <person name="Schobel S."/>
            <person name="Town C.D."/>
        </authorList>
    </citation>
    <scope>GENOME REANNOTATION</scope>
    <source>
        <strain>cv. Columbia</strain>
    </source>
</reference>
<reference key="3">
    <citation type="journal article" date="2003" name="Science">
        <title>Empirical analysis of transcriptional activity in the Arabidopsis genome.</title>
        <authorList>
            <person name="Yamada K."/>
            <person name="Lim J."/>
            <person name="Dale J.M."/>
            <person name="Chen H."/>
            <person name="Shinn P."/>
            <person name="Palm C.J."/>
            <person name="Southwick A.M."/>
            <person name="Wu H.C."/>
            <person name="Kim C.J."/>
            <person name="Nguyen M."/>
            <person name="Pham P.K."/>
            <person name="Cheuk R.F."/>
            <person name="Karlin-Newmann G."/>
            <person name="Liu S.X."/>
            <person name="Lam B."/>
            <person name="Sakano H."/>
            <person name="Wu T."/>
            <person name="Yu G."/>
            <person name="Miranda M."/>
            <person name="Quach H.L."/>
            <person name="Tripp M."/>
            <person name="Chang C.H."/>
            <person name="Lee J.M."/>
            <person name="Toriumi M.J."/>
            <person name="Chan M.M."/>
            <person name="Tang C.C."/>
            <person name="Onodera C.S."/>
            <person name="Deng J.M."/>
            <person name="Akiyama K."/>
            <person name="Ansari Y."/>
            <person name="Arakawa T."/>
            <person name="Banh J."/>
            <person name="Banno F."/>
            <person name="Bowser L."/>
            <person name="Brooks S.Y."/>
            <person name="Carninci P."/>
            <person name="Chao Q."/>
            <person name="Choy N."/>
            <person name="Enju A."/>
            <person name="Goldsmith A.D."/>
            <person name="Gurjal M."/>
            <person name="Hansen N.F."/>
            <person name="Hayashizaki Y."/>
            <person name="Johnson-Hopson C."/>
            <person name="Hsuan V.W."/>
            <person name="Iida K."/>
            <person name="Karnes M."/>
            <person name="Khan S."/>
            <person name="Koesema E."/>
            <person name="Ishida J."/>
            <person name="Jiang P.X."/>
            <person name="Jones T."/>
            <person name="Kawai J."/>
            <person name="Kamiya A."/>
            <person name="Meyers C."/>
            <person name="Nakajima M."/>
            <person name="Narusaka M."/>
            <person name="Seki M."/>
            <person name="Sakurai T."/>
            <person name="Satou M."/>
            <person name="Tamse R."/>
            <person name="Vaysberg M."/>
            <person name="Wallender E.K."/>
            <person name="Wong C."/>
            <person name="Yamamura Y."/>
            <person name="Yuan S."/>
            <person name="Shinozaki K."/>
            <person name="Davis R.W."/>
            <person name="Theologis A."/>
            <person name="Ecker J.R."/>
        </authorList>
    </citation>
    <scope>NUCLEOTIDE SEQUENCE [LARGE SCALE MRNA] (ISOFORM 2)</scope>
    <source>
        <strain>cv. Columbia</strain>
    </source>
</reference>
<reference key="4">
    <citation type="journal article" date="2004" name="Genome Res.">
        <title>Whole genome sequence comparisons and 'full-length' cDNA sequences: a combined approach to evaluate and improve Arabidopsis genome annotation.</title>
        <authorList>
            <person name="Castelli V."/>
            <person name="Aury J.-M."/>
            <person name="Jaillon O."/>
            <person name="Wincker P."/>
            <person name="Clepet C."/>
            <person name="Menard M."/>
            <person name="Cruaud C."/>
            <person name="Quetier F."/>
            <person name="Scarpelli C."/>
            <person name="Schaechter V."/>
            <person name="Temple G."/>
            <person name="Caboche M."/>
            <person name="Weissenbach J."/>
            <person name="Salanoubat M."/>
        </authorList>
    </citation>
    <scope>NUCLEOTIDE SEQUENCE [LARGE SCALE MRNA] (ISOFORM 1)</scope>
    <source>
        <strain>cv. Columbia</strain>
    </source>
</reference>
<reference key="5">
    <citation type="submission" date="2004-12" db="EMBL/GenBank/DDBJ databases">
        <title>Arabidopsis ORF clones.</title>
        <authorList>
            <person name="Shinn P."/>
            <person name="Chen H."/>
            <person name="Cheuk R.F."/>
            <person name="Kim C.J."/>
            <person name="Ecker J.R."/>
        </authorList>
    </citation>
    <scope>NUCLEOTIDE SEQUENCE [LARGE SCALE MRNA] (ISOFORM 2)</scope>
    <source>
        <strain>cv. Columbia</strain>
    </source>
</reference>
<sequence length="369" mass="40562">MSPPPQRIGLPWPELNDGLAYKDAISSSESELTTVSEFYFTKYKSSAPLLGWIQRIQNGQIQIDGEVVKDPNTLLRSGSKLVYSRLPWKEPDTPYSLEVLYEDDDLIALNKPSGLQVLPGGLFQQRTVLTQLQWCFGKNDSYIGSRESPHPVPVHRLGRGTSGILLCAKTKLAKTKLAAYFAEGTSLVGSGNLDQECGTGRKLSKIYRALADGIVEEDEVVIKQPIGVVRYPGVAQGLYVASPEGKPAFSKVFVLERDREKNCSLVKVEIQSGRPHQIRIHLAYMGHPLVGDPLYVAGGQPKCFDPDLVDDAAAFAEDGGYRRPNQAVPGDCGYHLHAHQVELPNLLNTHKVVKIVAPLPPILQTRCET</sequence>
<dbReference type="EC" id="5.4.99.-"/>
<dbReference type="EMBL" id="AL132972">
    <property type="protein sequence ID" value="CAC07917.1"/>
    <property type="status" value="ALT_SEQ"/>
    <property type="molecule type" value="Genomic_DNA"/>
</dbReference>
<dbReference type="EMBL" id="CP002686">
    <property type="protein sequence ID" value="AEE78921.1"/>
    <property type="molecule type" value="Genomic_DNA"/>
</dbReference>
<dbReference type="EMBL" id="CP002686">
    <property type="protein sequence ID" value="AEE78922.1"/>
    <property type="molecule type" value="Genomic_DNA"/>
</dbReference>
<dbReference type="EMBL" id="AY069882">
    <property type="protein sequence ID" value="AAL47436.1"/>
    <property type="molecule type" value="mRNA"/>
</dbReference>
<dbReference type="EMBL" id="BX823148">
    <property type="status" value="NOT_ANNOTATED_CDS"/>
    <property type="molecule type" value="mRNA"/>
</dbReference>
<dbReference type="EMBL" id="BT020427">
    <property type="protein sequence ID" value="AAW28554.1"/>
    <property type="molecule type" value="mRNA"/>
</dbReference>
<dbReference type="PIR" id="T46096">
    <property type="entry name" value="T46096"/>
</dbReference>
<dbReference type="RefSeq" id="NP_190794.2">
    <molecule id="Q5M721-2"/>
    <property type="nucleotide sequence ID" value="NM_115086.3"/>
</dbReference>
<dbReference type="RefSeq" id="NP_974416.1">
    <molecule id="Q5M721-1"/>
    <property type="nucleotide sequence ID" value="NM_202687.3"/>
</dbReference>
<dbReference type="SMR" id="Q5M721"/>
<dbReference type="FunCoup" id="Q5M721">
    <property type="interactions" value="1526"/>
</dbReference>
<dbReference type="STRING" id="3702.Q5M721"/>
<dbReference type="ProteomicsDB" id="236545">
    <molecule id="Q5M721-1"/>
</dbReference>
<dbReference type="EnsemblPlants" id="AT3G52260.1">
    <molecule id="Q5M721-2"/>
    <property type="protein sequence ID" value="AT3G52260.1"/>
    <property type="gene ID" value="AT3G52260"/>
</dbReference>
<dbReference type="EnsemblPlants" id="AT3G52260.2">
    <molecule id="Q5M721-1"/>
    <property type="protein sequence ID" value="AT3G52260.2"/>
    <property type="gene ID" value="AT3G52260"/>
</dbReference>
<dbReference type="GeneID" id="824391"/>
<dbReference type="Gramene" id="AT3G52260.1">
    <molecule id="Q5M721-2"/>
    <property type="protein sequence ID" value="AT3G52260.1"/>
    <property type="gene ID" value="AT3G52260"/>
</dbReference>
<dbReference type="Gramene" id="AT3G52260.2">
    <molecule id="Q5M721-1"/>
    <property type="protein sequence ID" value="AT3G52260.2"/>
    <property type="gene ID" value="AT3G52260"/>
</dbReference>
<dbReference type="KEGG" id="ath:AT3G52260"/>
<dbReference type="Araport" id="AT3G52260"/>
<dbReference type="TAIR" id="AT3G52260"/>
<dbReference type="InParanoid" id="Q5M721"/>
<dbReference type="OMA" id="TTYMHIG"/>
<dbReference type="OrthoDB" id="428658at2759"/>
<dbReference type="PhylomeDB" id="Q5M721"/>
<dbReference type="PRO" id="PR:Q5M721"/>
<dbReference type="Proteomes" id="UP000006548">
    <property type="component" value="Chromosome 3"/>
</dbReference>
<dbReference type="ExpressionAtlas" id="Q5M721">
    <property type="expression patterns" value="baseline and differential"/>
</dbReference>
<dbReference type="GO" id="GO:0009982">
    <property type="term" value="F:pseudouridine synthase activity"/>
    <property type="evidence" value="ECO:0007669"/>
    <property type="project" value="InterPro"/>
</dbReference>
<dbReference type="GO" id="GO:0003723">
    <property type="term" value="F:RNA binding"/>
    <property type="evidence" value="ECO:0007669"/>
    <property type="project" value="UniProtKB-KW"/>
</dbReference>
<dbReference type="GO" id="GO:0001522">
    <property type="term" value="P:pseudouridine synthesis"/>
    <property type="evidence" value="ECO:0007669"/>
    <property type="project" value="InterPro"/>
</dbReference>
<dbReference type="CDD" id="cd02869">
    <property type="entry name" value="PseudoU_synth_RluA_like"/>
    <property type="match status" value="1"/>
</dbReference>
<dbReference type="Gene3D" id="3.30.2350.10">
    <property type="entry name" value="Pseudouridine synthase"/>
    <property type="match status" value="1"/>
</dbReference>
<dbReference type="InterPro" id="IPR020103">
    <property type="entry name" value="PsdUridine_synth_cat_dom_sf"/>
</dbReference>
<dbReference type="InterPro" id="IPR006224">
    <property type="entry name" value="PsdUridine_synth_RluA-like_CS"/>
</dbReference>
<dbReference type="InterPro" id="IPR006145">
    <property type="entry name" value="PsdUridine_synth_RsuA/RluA"/>
</dbReference>
<dbReference type="InterPro" id="IPR050188">
    <property type="entry name" value="RluA_PseudoU_synthase"/>
</dbReference>
<dbReference type="PANTHER" id="PTHR21600">
    <property type="entry name" value="MITOCHONDRIAL RNA PSEUDOURIDINE SYNTHASE"/>
    <property type="match status" value="1"/>
</dbReference>
<dbReference type="PANTHER" id="PTHR21600:SF88">
    <property type="entry name" value="RNA PSEUDOURIDINE SYNTHASE 5"/>
    <property type="match status" value="1"/>
</dbReference>
<dbReference type="Pfam" id="PF00849">
    <property type="entry name" value="PseudoU_synth_2"/>
    <property type="match status" value="1"/>
</dbReference>
<dbReference type="SUPFAM" id="SSF55120">
    <property type="entry name" value="Pseudouridine synthase"/>
    <property type="match status" value="1"/>
</dbReference>
<dbReference type="PROSITE" id="PS01129">
    <property type="entry name" value="PSI_RLU"/>
    <property type="match status" value="1"/>
</dbReference>
<evidence type="ECO:0000303" key="1">
    <source>
    </source>
</evidence>
<evidence type="ECO:0000303" key="2">
    <source ref="5"/>
</evidence>
<evidence type="ECO:0000305" key="3"/>
<organism>
    <name type="scientific">Arabidopsis thaliana</name>
    <name type="common">Mouse-ear cress</name>
    <dbReference type="NCBI Taxonomy" id="3702"/>
    <lineage>
        <taxon>Eukaryota</taxon>
        <taxon>Viridiplantae</taxon>
        <taxon>Streptophyta</taxon>
        <taxon>Embryophyta</taxon>
        <taxon>Tracheophyta</taxon>
        <taxon>Spermatophyta</taxon>
        <taxon>Magnoliopsida</taxon>
        <taxon>eudicotyledons</taxon>
        <taxon>Gunneridae</taxon>
        <taxon>Pentapetalae</taxon>
        <taxon>rosids</taxon>
        <taxon>malvids</taxon>
        <taxon>Brassicales</taxon>
        <taxon>Brassicaceae</taxon>
        <taxon>Camelineae</taxon>
        <taxon>Arabidopsis</taxon>
    </lineage>
</organism>
<feature type="chain" id="PRO_0000371425" description="RNA pseudouridine synthase 5">
    <location>
        <begin position="1"/>
        <end position="369"/>
    </location>
</feature>
<feature type="domain" description="S4 RNA-binding">
    <location>
        <begin position="47"/>
        <end position="104"/>
    </location>
</feature>
<feature type="splice variant" id="VSP_037036" description="In isoform 2." evidence="1 2">
    <original>VGDPLYVAGGQPKCFDPDLVDDAAAFAEDGGYRRPNQAVPGDCGYHLHAHQVELPNLLNTHKVVKIVAPLPPILQTRCET</original>
    <variation>GTLFM</variation>
    <location>
        <begin position="290"/>
        <end position="369"/>
    </location>
</feature>
<feature type="sequence conflict" description="In Ref. 3; AAL47436." evidence="3" ref="3">
    <original>G</original>
    <variation>W</variation>
    <location>
        <position position="245"/>
    </location>
</feature>
<feature type="sequence conflict" description="In Ref. 4; BX823148." evidence="3" ref="4">
    <original>V</original>
    <variation>I</variation>
    <location>
        <position position="352"/>
    </location>
</feature>
<comment type="catalytic activity">
    <reaction>
        <text>a uridine in RNA = a pseudouridine in RNA</text>
        <dbReference type="Rhea" id="RHEA:48348"/>
        <dbReference type="Rhea" id="RHEA-COMP:12068"/>
        <dbReference type="Rhea" id="RHEA-COMP:12069"/>
        <dbReference type="ChEBI" id="CHEBI:65314"/>
        <dbReference type="ChEBI" id="CHEBI:65315"/>
    </reaction>
</comment>
<comment type="alternative products">
    <event type="alternative splicing"/>
    <isoform>
        <id>Q5M721-1</id>
        <name>1</name>
        <sequence type="displayed"/>
    </isoform>
    <isoform>
        <id>Q5M721-2</id>
        <name>2</name>
        <sequence type="described" ref="VSP_037036"/>
    </isoform>
</comment>
<comment type="miscellaneous">
    <molecule>Isoform 2</molecule>
    <text evidence="3">May be due to a competing donor splice site.</text>
</comment>
<comment type="similarity">
    <text evidence="3">Belongs to the pseudouridine synthase RluA family.</text>
</comment>
<comment type="sequence caution" evidence="3">
    <conflict type="erroneous gene model prediction">
        <sequence resource="EMBL-CDS" id="CAC07917"/>
    </conflict>
</comment>
<proteinExistence type="evidence at transcript level"/>
<accession>Q5M721</accession>
<accession>Q8VYW0</accession>
<accession>Q9FT56</accession>
<protein>
    <recommendedName>
        <fullName>RNA pseudouridine synthase 5</fullName>
        <ecNumber>5.4.99.-</ecNumber>
    </recommendedName>
    <alternativeName>
        <fullName>RNA pseudouridylate synthase 5</fullName>
    </alternativeName>
    <alternativeName>
        <fullName>RNA-uridine isomerase 5</fullName>
    </alternativeName>
</protein>
<gene>
    <name type="ordered locus">At3g52260</name>
    <name type="ORF">T25B15.30</name>
</gene>
<keyword id="KW-0025">Alternative splicing</keyword>
<keyword id="KW-0413">Isomerase</keyword>
<keyword id="KW-1185">Reference proteome</keyword>
<keyword id="KW-0694">RNA-binding</keyword>
<name>PUS5_ARATH</name>